<reference evidence="4" key="1">
    <citation type="submission" date="2005-06" db="EMBL/GenBank/DDBJ databases">
        <authorList>
            <consortium name="NIH - Xenopus Gene Collection (XGC) project"/>
        </authorList>
    </citation>
    <scope>NUCLEOTIDE SEQUENCE [LARGE SCALE MRNA]</scope>
    <source>
        <tissue evidence="4">Egg</tissue>
        <tissue evidence="5">Embryo</tissue>
    </source>
</reference>
<gene>
    <name type="primary">s100pbp</name>
</gene>
<proteinExistence type="evidence at transcript level"/>
<accession>Q4V7J0</accession>
<accession>Q2TAF2</accession>
<feature type="chain" id="PRO_0000317053" description="S100P-binding protein">
    <location>
        <begin position="1"/>
        <end position="560"/>
    </location>
</feature>
<feature type="region of interest" description="Disordered" evidence="2">
    <location>
        <begin position="259"/>
        <end position="292"/>
    </location>
</feature>
<feature type="region of interest" description="Disordered" evidence="2">
    <location>
        <begin position="313"/>
        <end position="400"/>
    </location>
</feature>
<feature type="compositionally biased region" description="Polar residues" evidence="2">
    <location>
        <begin position="313"/>
        <end position="352"/>
    </location>
</feature>
<feature type="compositionally biased region" description="Basic and acidic residues" evidence="2">
    <location>
        <begin position="378"/>
        <end position="387"/>
    </location>
</feature>
<organism>
    <name type="scientific">Xenopus laevis</name>
    <name type="common">African clawed frog</name>
    <dbReference type="NCBI Taxonomy" id="8355"/>
    <lineage>
        <taxon>Eukaryota</taxon>
        <taxon>Metazoa</taxon>
        <taxon>Chordata</taxon>
        <taxon>Craniata</taxon>
        <taxon>Vertebrata</taxon>
        <taxon>Euteleostomi</taxon>
        <taxon>Amphibia</taxon>
        <taxon>Batrachia</taxon>
        <taxon>Anura</taxon>
        <taxon>Pipoidea</taxon>
        <taxon>Pipidae</taxon>
        <taxon>Xenopodinae</taxon>
        <taxon>Xenopus</taxon>
        <taxon>Xenopus</taxon>
    </lineage>
</organism>
<comment type="subcellular location">
    <subcellularLocation>
        <location evidence="1">Nucleus</location>
    </subcellularLocation>
</comment>
<comment type="sequence caution" evidence="3">
    <conflict type="erroneous initiation">
        <sequence resource="EMBL-CDS" id="AAH97885"/>
    </conflict>
</comment>
<comment type="sequence caution" evidence="3">
    <conflict type="erroneous initiation">
        <sequence resource="EMBL-CDS" id="AAI10958"/>
    </conflict>
</comment>
<name>S1PBP_XENLA</name>
<dbReference type="EMBL" id="BC097885">
    <property type="protein sequence ID" value="AAH97885.1"/>
    <property type="status" value="ALT_INIT"/>
    <property type="molecule type" value="mRNA"/>
</dbReference>
<dbReference type="EMBL" id="BC110957">
    <property type="protein sequence ID" value="AAI10958.1"/>
    <property type="status" value="ALT_INIT"/>
    <property type="molecule type" value="mRNA"/>
</dbReference>
<dbReference type="RefSeq" id="NP_001090162.1">
    <property type="nucleotide sequence ID" value="NM_001096693.1"/>
</dbReference>
<dbReference type="DNASU" id="735242"/>
<dbReference type="AGR" id="Xenbase:XB-GENE-866415"/>
<dbReference type="Xenbase" id="XB-GENE-866415">
    <property type="gene designation" value="s100pbp.L"/>
</dbReference>
<dbReference type="Proteomes" id="UP000186698">
    <property type="component" value="Unplaced"/>
</dbReference>
<dbReference type="Bgee" id="735242">
    <property type="expression patterns" value="Expressed in egg cell and 19 other cell types or tissues"/>
</dbReference>
<dbReference type="GO" id="GO:0005634">
    <property type="term" value="C:nucleus"/>
    <property type="evidence" value="ECO:0007669"/>
    <property type="project" value="UniProtKB-SubCell"/>
</dbReference>
<dbReference type="GO" id="GO:0048306">
    <property type="term" value="F:calcium-dependent protein binding"/>
    <property type="evidence" value="ECO:0007669"/>
    <property type="project" value="InterPro"/>
</dbReference>
<dbReference type="InterPro" id="IPR026097">
    <property type="entry name" value="S100PBP"/>
</dbReference>
<dbReference type="Pfam" id="PF15427">
    <property type="entry name" value="S100PBPR"/>
    <property type="match status" value="1"/>
</dbReference>
<sequence>MKAAYNYRATKTACSDRQVLILGTSWADPQPGTMEEIRISIVNDKATRNKRNIEEETDLSPPPKKLRSAVFLCSTPSSAPHCSQNVEVFDEFDDSLLEASSDESDSPLHMTLVQIEELLEDDCDYAAEPPRWDEESDSVGFLQELAVPNGSQSDLVELRNLNSPLAGEQSDSSQTLTEETVCSQDTSNYAAMAPSPCWSNISTAGQNEEAGGNVSTTTSPVLHKHEMDRGSRDSDICSTLSSSHLPGDLKVVDEISETSDIPFDGDIDELLTLSPGDTTSSEEDKITSESTPILSKLESVPVVHSHSEAFCKSSSSLQLPETSLASSTEPSPSLQLSASSVTAMNGQNNSNKVPPPTSDTAPGPQLGTDTNSQKSKGQKVEPKKNKPIEQIGLKQGGKSFAAPVDHPVKENLGQTSKEQVAASIGCKKKVNPSPLQEKKHGAVPTKPRAACRPQISNSELEKNRNIYRDRVMMHLEVHSISEEPNYELAYLLNETSRENPTWQHPSDYTKRNYYVRRQPAPCSLNDWVMRNGGHSIQRFHGLPCTFKRSPMPGVLPTGPT</sequence>
<evidence type="ECO:0000250" key="1">
    <source>
        <dbReference type="UniProtKB" id="Q96BU1"/>
    </source>
</evidence>
<evidence type="ECO:0000256" key="2">
    <source>
        <dbReference type="SAM" id="MobiDB-lite"/>
    </source>
</evidence>
<evidence type="ECO:0000305" key="3"/>
<evidence type="ECO:0000312" key="4">
    <source>
        <dbReference type="EMBL" id="AAH97885.1"/>
    </source>
</evidence>
<evidence type="ECO:0000312" key="5">
    <source>
        <dbReference type="EMBL" id="AAI10958.1"/>
    </source>
</evidence>
<keyword id="KW-0539">Nucleus</keyword>
<keyword id="KW-1185">Reference proteome</keyword>
<protein>
    <recommendedName>
        <fullName>S100P-binding protein</fullName>
    </recommendedName>
</protein>